<reference key="1">
    <citation type="submission" date="1999-02" db="EMBL/GenBank/DDBJ databases">
        <title>Methyltransferase related protein.</title>
        <authorList>
            <person name="Tamura M."/>
            <person name="Nashimoto M."/>
            <person name="Kaspar R.L."/>
        </authorList>
    </citation>
    <scope>NUCLEOTIDE SEQUENCE [MRNA]</scope>
</reference>
<reference key="2">
    <citation type="journal article" date="2005" name="Science">
        <title>The transcriptional landscape of the mammalian genome.</title>
        <authorList>
            <person name="Carninci P."/>
            <person name="Kasukawa T."/>
            <person name="Katayama S."/>
            <person name="Gough J."/>
            <person name="Frith M.C."/>
            <person name="Maeda N."/>
            <person name="Oyama R."/>
            <person name="Ravasi T."/>
            <person name="Lenhard B."/>
            <person name="Wells C."/>
            <person name="Kodzius R."/>
            <person name="Shimokawa K."/>
            <person name="Bajic V.B."/>
            <person name="Brenner S.E."/>
            <person name="Batalov S."/>
            <person name="Forrest A.R."/>
            <person name="Zavolan M."/>
            <person name="Davis M.J."/>
            <person name="Wilming L.G."/>
            <person name="Aidinis V."/>
            <person name="Allen J.E."/>
            <person name="Ambesi-Impiombato A."/>
            <person name="Apweiler R."/>
            <person name="Aturaliya R.N."/>
            <person name="Bailey T.L."/>
            <person name="Bansal M."/>
            <person name="Baxter L."/>
            <person name="Beisel K.W."/>
            <person name="Bersano T."/>
            <person name="Bono H."/>
            <person name="Chalk A.M."/>
            <person name="Chiu K.P."/>
            <person name="Choudhary V."/>
            <person name="Christoffels A."/>
            <person name="Clutterbuck D.R."/>
            <person name="Crowe M.L."/>
            <person name="Dalla E."/>
            <person name="Dalrymple B.P."/>
            <person name="de Bono B."/>
            <person name="Della Gatta G."/>
            <person name="di Bernardo D."/>
            <person name="Down T."/>
            <person name="Engstrom P."/>
            <person name="Fagiolini M."/>
            <person name="Faulkner G."/>
            <person name="Fletcher C.F."/>
            <person name="Fukushima T."/>
            <person name="Furuno M."/>
            <person name="Futaki S."/>
            <person name="Gariboldi M."/>
            <person name="Georgii-Hemming P."/>
            <person name="Gingeras T.R."/>
            <person name="Gojobori T."/>
            <person name="Green R.E."/>
            <person name="Gustincich S."/>
            <person name="Harbers M."/>
            <person name="Hayashi Y."/>
            <person name="Hensch T.K."/>
            <person name="Hirokawa N."/>
            <person name="Hill D."/>
            <person name="Huminiecki L."/>
            <person name="Iacono M."/>
            <person name="Ikeo K."/>
            <person name="Iwama A."/>
            <person name="Ishikawa T."/>
            <person name="Jakt M."/>
            <person name="Kanapin A."/>
            <person name="Katoh M."/>
            <person name="Kawasawa Y."/>
            <person name="Kelso J."/>
            <person name="Kitamura H."/>
            <person name="Kitano H."/>
            <person name="Kollias G."/>
            <person name="Krishnan S.P."/>
            <person name="Kruger A."/>
            <person name="Kummerfeld S.K."/>
            <person name="Kurochkin I.V."/>
            <person name="Lareau L.F."/>
            <person name="Lazarevic D."/>
            <person name="Lipovich L."/>
            <person name="Liu J."/>
            <person name="Liuni S."/>
            <person name="McWilliam S."/>
            <person name="Madan Babu M."/>
            <person name="Madera M."/>
            <person name="Marchionni L."/>
            <person name="Matsuda H."/>
            <person name="Matsuzawa S."/>
            <person name="Miki H."/>
            <person name="Mignone F."/>
            <person name="Miyake S."/>
            <person name="Morris K."/>
            <person name="Mottagui-Tabar S."/>
            <person name="Mulder N."/>
            <person name="Nakano N."/>
            <person name="Nakauchi H."/>
            <person name="Ng P."/>
            <person name="Nilsson R."/>
            <person name="Nishiguchi S."/>
            <person name="Nishikawa S."/>
            <person name="Nori F."/>
            <person name="Ohara O."/>
            <person name="Okazaki Y."/>
            <person name="Orlando V."/>
            <person name="Pang K.C."/>
            <person name="Pavan W.J."/>
            <person name="Pavesi G."/>
            <person name="Pesole G."/>
            <person name="Petrovsky N."/>
            <person name="Piazza S."/>
            <person name="Reed J."/>
            <person name="Reid J.F."/>
            <person name="Ring B.Z."/>
            <person name="Ringwald M."/>
            <person name="Rost B."/>
            <person name="Ruan Y."/>
            <person name="Salzberg S.L."/>
            <person name="Sandelin A."/>
            <person name="Schneider C."/>
            <person name="Schoenbach C."/>
            <person name="Sekiguchi K."/>
            <person name="Semple C.A."/>
            <person name="Seno S."/>
            <person name="Sessa L."/>
            <person name="Sheng Y."/>
            <person name="Shibata Y."/>
            <person name="Shimada H."/>
            <person name="Shimada K."/>
            <person name="Silva D."/>
            <person name="Sinclair B."/>
            <person name="Sperling S."/>
            <person name="Stupka E."/>
            <person name="Sugiura K."/>
            <person name="Sultana R."/>
            <person name="Takenaka Y."/>
            <person name="Taki K."/>
            <person name="Tammoja K."/>
            <person name="Tan S.L."/>
            <person name="Tang S."/>
            <person name="Taylor M.S."/>
            <person name="Tegner J."/>
            <person name="Teichmann S.A."/>
            <person name="Ueda H.R."/>
            <person name="van Nimwegen E."/>
            <person name="Verardo R."/>
            <person name="Wei C.L."/>
            <person name="Yagi K."/>
            <person name="Yamanishi H."/>
            <person name="Zabarovsky E."/>
            <person name="Zhu S."/>
            <person name="Zimmer A."/>
            <person name="Hide W."/>
            <person name="Bult C."/>
            <person name="Grimmond S.M."/>
            <person name="Teasdale R.D."/>
            <person name="Liu E.T."/>
            <person name="Brusic V."/>
            <person name="Quackenbush J."/>
            <person name="Wahlestedt C."/>
            <person name="Mattick J.S."/>
            <person name="Hume D.A."/>
            <person name="Kai C."/>
            <person name="Sasaki D."/>
            <person name="Tomaru Y."/>
            <person name="Fukuda S."/>
            <person name="Kanamori-Katayama M."/>
            <person name="Suzuki M."/>
            <person name="Aoki J."/>
            <person name="Arakawa T."/>
            <person name="Iida J."/>
            <person name="Imamura K."/>
            <person name="Itoh M."/>
            <person name="Kato T."/>
            <person name="Kawaji H."/>
            <person name="Kawagashira N."/>
            <person name="Kawashima T."/>
            <person name="Kojima M."/>
            <person name="Kondo S."/>
            <person name="Konno H."/>
            <person name="Nakano K."/>
            <person name="Ninomiya N."/>
            <person name="Nishio T."/>
            <person name="Okada M."/>
            <person name="Plessy C."/>
            <person name="Shibata K."/>
            <person name="Shiraki T."/>
            <person name="Suzuki S."/>
            <person name="Tagami M."/>
            <person name="Waki K."/>
            <person name="Watahiki A."/>
            <person name="Okamura-Oho Y."/>
            <person name="Suzuki H."/>
            <person name="Kawai J."/>
            <person name="Hayashizaki Y."/>
        </authorList>
    </citation>
    <scope>NUCLEOTIDE SEQUENCE [LARGE SCALE MRNA]</scope>
    <source>
        <strain>C57BL/6J</strain>
        <tissue>Extraembryonic tissue</tissue>
        <tissue>Placenta</tissue>
    </source>
</reference>
<reference key="3">
    <citation type="submission" date="2005-07" db="EMBL/GenBank/DDBJ databases">
        <authorList>
            <person name="Mural R.J."/>
            <person name="Adams M.D."/>
            <person name="Myers E.W."/>
            <person name="Smith H.O."/>
            <person name="Venter J.C."/>
        </authorList>
    </citation>
    <scope>NUCLEOTIDE SEQUENCE [LARGE SCALE GENOMIC DNA]</scope>
</reference>
<reference key="4">
    <citation type="journal article" date="2004" name="Genome Res.">
        <title>The status, quality, and expansion of the NIH full-length cDNA project: the Mammalian Gene Collection (MGC).</title>
        <authorList>
            <consortium name="The MGC Project Team"/>
        </authorList>
    </citation>
    <scope>NUCLEOTIDE SEQUENCE [LARGE SCALE MRNA]</scope>
</reference>
<reference key="5">
    <citation type="journal article" date="1999" name="Genomics">
        <title>Molecular analysis of METTL1, a novel human methyltransferase-like gene with a high degree of phylogenetic conservation.</title>
        <authorList>
            <person name="Bahr A."/>
            <person name="Hankeln T."/>
            <person name="Fiedler T."/>
            <person name="Hegemann J."/>
            <person name="Schmidt E.R."/>
        </authorList>
    </citation>
    <scope>NUCLEOTIDE SEQUENCE [MRNA] OF 4-268</scope>
    <source>
        <tissue>Brain</tissue>
    </source>
</reference>
<reference key="6">
    <citation type="journal article" date="2010" name="Cell">
        <title>A tissue-specific atlas of mouse protein phosphorylation and expression.</title>
        <authorList>
            <person name="Huttlin E.L."/>
            <person name="Jedrychowski M.P."/>
            <person name="Elias J.E."/>
            <person name="Goswami T."/>
            <person name="Rad R."/>
            <person name="Beausoleil S.A."/>
            <person name="Villen J."/>
            <person name="Haas W."/>
            <person name="Sowa M.E."/>
            <person name="Gygi S.P."/>
        </authorList>
    </citation>
    <scope>IDENTIFICATION BY MASS SPECTROMETRY [LARGE SCALE ANALYSIS]</scope>
    <source>
        <tissue>Brain</tissue>
        <tissue>Kidney</tissue>
        <tissue>Liver</tissue>
        <tissue>Spleen</tissue>
        <tissue>Testis</tissue>
    </source>
</reference>
<reference key="7">
    <citation type="journal article" date="2018" name="Mol. Cell">
        <title>Mettl1/Wdr4-mediated m7G tRNA methylome is required for normal mRNA translation and embryonic stem cell self-renewal and differentiation.</title>
        <authorList>
            <person name="Lin S."/>
            <person name="Liu Q."/>
            <person name="Lelyveld V.S."/>
            <person name="Choe J."/>
            <person name="Szostak J.W."/>
            <person name="Gregory R.I."/>
        </authorList>
    </citation>
    <scope>FUNCTION</scope>
    <scope>PATHWAY</scope>
</reference>
<reference key="8">
    <citation type="journal article" date="2021" name="Mol. Cell">
        <title>N7-Methylguanosine tRNA modification enhances oncogenic mRNA translation and promotes intrahepatic cholangiocarcinoma progression.</title>
        <authorList>
            <person name="Dai Z."/>
            <person name="Liu H."/>
            <person name="Liao J."/>
            <person name="Huang C."/>
            <person name="Ren X."/>
            <person name="Zhu W."/>
            <person name="Zhu S."/>
            <person name="Peng B."/>
            <person name="Li S."/>
            <person name="Lai J."/>
            <person name="Liang L."/>
            <person name="Xu L."/>
            <person name="Peng S."/>
            <person name="Lin S."/>
            <person name="Kuang M."/>
        </authorList>
    </citation>
    <scope>DISRUPTION PHENOTYPE</scope>
</reference>
<keyword id="KW-0489">Methyltransferase</keyword>
<keyword id="KW-0539">Nucleus</keyword>
<keyword id="KW-0597">Phosphoprotein</keyword>
<keyword id="KW-1185">Reference proteome</keyword>
<keyword id="KW-0694">RNA-binding</keyword>
<keyword id="KW-0949">S-adenosyl-L-methionine</keyword>
<keyword id="KW-0808">Transferase</keyword>
<keyword id="KW-0819">tRNA processing</keyword>
<keyword id="KW-0820">tRNA-binding</keyword>
<sequence>MMAGAEAPQPQKRYYRQRAHSNPMADHTLRYPVKPEEMDWSELYPEFFAPLIQNKSHDDPKDEKEKHSGAQVEFADIGCGYGGLLVALSPLFPDTLILGLEIRVKVSDYVQDRIRALRAAPGGGFQNIACLRSNAMKHLPNFFRKGQLAKMFFLFPDPHFKRTKHKWRIISPTLLAEYAYVLRVGGLVYTVTDVPELHEWMCTHFEEHPLFERVPLEELSEDPIVEHLGSSTEEGKKVLRNGGKNFPAVFRRIQDPLLQAVTPNPTLP</sequence>
<feature type="chain" id="PRO_0000171432" description="tRNA (guanine-N(7)-)-methyltransferase">
    <location>
        <begin position="1"/>
        <end position="268"/>
    </location>
</feature>
<feature type="region of interest" description="Disordered" evidence="2">
    <location>
        <begin position="1"/>
        <end position="21"/>
    </location>
</feature>
<feature type="region of interest" description="AlphaC helix" evidence="1">
    <location>
        <begin position="158"/>
        <end position="166"/>
    </location>
</feature>
<feature type="region of interest" description="Alpha6 helix" evidence="1">
    <location>
        <begin position="232"/>
        <end position="240"/>
    </location>
</feature>
<feature type="active site" evidence="1">
    <location>
        <position position="157"/>
    </location>
</feature>
<feature type="binding site" evidence="1">
    <location>
        <position position="78"/>
    </location>
    <ligand>
        <name>S-adenosyl-L-methionine</name>
        <dbReference type="ChEBI" id="CHEBI:59789"/>
    </ligand>
</feature>
<feature type="binding site" evidence="1">
    <location>
        <position position="101"/>
    </location>
    <ligand>
        <name>S-adenosyl-L-methionine</name>
        <dbReference type="ChEBI" id="CHEBI:59789"/>
    </ligand>
</feature>
<feature type="binding site" evidence="1">
    <location>
        <position position="103"/>
    </location>
    <ligand>
        <name>S-adenosyl-L-methionine</name>
        <dbReference type="ChEBI" id="CHEBI:59789"/>
    </ligand>
</feature>
<feature type="binding site" evidence="1">
    <location>
        <position position="134"/>
    </location>
    <ligand>
        <name>S-adenosyl-L-methionine</name>
        <dbReference type="ChEBI" id="CHEBI:59789"/>
    </ligand>
</feature>
<feature type="binding site" evidence="1">
    <location>
        <position position="135"/>
    </location>
    <ligand>
        <name>S-adenosyl-L-methionine</name>
        <dbReference type="ChEBI" id="CHEBI:59789"/>
    </ligand>
</feature>
<feature type="binding site" evidence="1">
    <location>
        <position position="154"/>
    </location>
    <ligand>
        <name>S-adenosyl-L-methionine</name>
        <dbReference type="ChEBI" id="CHEBI:59789"/>
    </ligand>
</feature>
<feature type="binding site" evidence="1">
    <location>
        <position position="232"/>
    </location>
    <ligand>
        <name>S-adenosyl-L-methionine</name>
        <dbReference type="ChEBI" id="CHEBI:59789"/>
    </ligand>
</feature>
<feature type="binding site" evidence="1">
    <location>
        <position position="234"/>
    </location>
    <ligand>
        <name>S-adenosyl-L-methionine</name>
        <dbReference type="ChEBI" id="CHEBI:59789"/>
    </ligand>
</feature>
<feature type="modified residue" description="Phosphoserine" evidence="1">
    <location>
        <position position="21"/>
    </location>
</feature>
<feature type="sequence conflict" description="In Ref. 4; AAH12649." evidence="5" ref="4">
    <original>I</original>
    <variation>N</variation>
    <location>
        <position position="52"/>
    </location>
</feature>
<feature type="sequence conflict" description="In Ref. 4; AAH12649." evidence="5" ref="4">
    <original>S</original>
    <variation>N</variation>
    <location>
        <position position="56"/>
    </location>
</feature>
<feature type="sequence conflict" description="In Ref. 4; AAH12649." evidence="5" ref="4">
    <original>R</original>
    <variation>C</variation>
    <location>
        <position position="213"/>
    </location>
</feature>
<accession>Q9Z120</accession>
<accession>Q3TU83</accession>
<accession>Q921G5</accession>
<protein>
    <recommendedName>
        <fullName evidence="1">tRNA (guanine-N(7)-)-methyltransferase</fullName>
        <ecNumber evidence="1">2.1.1.33</ecNumber>
    </recommendedName>
    <alternativeName>
        <fullName evidence="1">Methyltransferase-like protein 1</fullName>
    </alternativeName>
    <alternativeName>
        <fullName evidence="1">mRNA (guanine-N(7)-)-methyltransferase</fullName>
        <ecNumber evidence="1">2.1.1.-</ecNumber>
    </alternativeName>
    <alternativeName>
        <fullName evidence="1">miRNA (guanine-N(7)-)-methyltransferase</fullName>
        <ecNumber evidence="1">2.1.1.-</ecNumber>
    </alternativeName>
    <alternativeName>
        <fullName evidence="1">tRNA (guanine(46)-N(7))-methyltransferase</fullName>
    </alternativeName>
    <alternativeName>
        <fullName evidence="1">tRNA(m7G46)-methyltransferase</fullName>
    </alternativeName>
</protein>
<proteinExistence type="evidence at protein level"/>
<organism>
    <name type="scientific">Mus musculus</name>
    <name type="common">Mouse</name>
    <dbReference type="NCBI Taxonomy" id="10090"/>
    <lineage>
        <taxon>Eukaryota</taxon>
        <taxon>Metazoa</taxon>
        <taxon>Chordata</taxon>
        <taxon>Craniata</taxon>
        <taxon>Vertebrata</taxon>
        <taxon>Euteleostomi</taxon>
        <taxon>Mammalia</taxon>
        <taxon>Eutheria</taxon>
        <taxon>Euarchontoglires</taxon>
        <taxon>Glires</taxon>
        <taxon>Rodentia</taxon>
        <taxon>Myomorpha</taxon>
        <taxon>Muroidea</taxon>
        <taxon>Muridae</taxon>
        <taxon>Murinae</taxon>
        <taxon>Mus</taxon>
        <taxon>Mus</taxon>
    </lineage>
</organism>
<name>TRMB_MOUSE</name>
<evidence type="ECO:0000255" key="1">
    <source>
        <dbReference type="HAMAP-Rule" id="MF_03055"/>
    </source>
</evidence>
<evidence type="ECO:0000256" key="2">
    <source>
        <dbReference type="SAM" id="MobiDB-lite"/>
    </source>
</evidence>
<evidence type="ECO:0000269" key="3">
    <source>
    </source>
</evidence>
<evidence type="ECO:0000269" key="4">
    <source>
    </source>
</evidence>
<evidence type="ECO:0000305" key="5"/>
<evidence type="ECO:0000312" key="6">
    <source>
        <dbReference type="MGI" id="MGI:1339986"/>
    </source>
</evidence>
<comment type="function">
    <text evidence="1 3">Catalytic component of METTL1-WDR4 methyltransferase complex that mediates the formation of N(7)-methylguanine in a subset of RNA species, such as tRNAs, mRNAs and microRNAs (miRNAs) (By similarity). Catalyzes the formation of N(7)-methylguanine at position 46 (m7G46) in a large subset of tRNAs that contain the 5'-RAGGU-3' motif within the variable loop (By similarity). M7G46 interacts with C13-G22 in the D-loop to stabilize tRNA tertiary structure and protect tRNAs from decay (By similarity). Also acts as a methyltransferase for a subset of internal N(7)-methylguanine in mRNAs (PubMed:29983320). Internal N(7)-methylguanine methylation of mRNAs in response to stress promotes their relocalization to stress granules, thereby suppressing their translation (PubMed:29983320). Also methylates a specific subset of miRNAs, such as let-7 (By similarity). N(7)-methylguanine methylation of let-7 miRNA promotes let-7 miRNA processing by disrupting an inhibitory secondary structure within the primary miRNA transcript (pri-miRNA) (By similarity). Acts as a regulator of embryonic stem cell self-renewal and differentiation (PubMed:29983320).</text>
</comment>
<comment type="catalytic activity">
    <reaction evidence="1">
        <text>guanosine(46) in tRNA + S-adenosyl-L-methionine = N(7)-methylguanosine(46) in tRNA + S-adenosyl-L-homocysteine</text>
        <dbReference type="Rhea" id="RHEA:42708"/>
        <dbReference type="Rhea" id="RHEA-COMP:10188"/>
        <dbReference type="Rhea" id="RHEA-COMP:10189"/>
        <dbReference type="ChEBI" id="CHEBI:57856"/>
        <dbReference type="ChEBI" id="CHEBI:59789"/>
        <dbReference type="ChEBI" id="CHEBI:74269"/>
        <dbReference type="ChEBI" id="CHEBI:74480"/>
        <dbReference type="EC" id="2.1.1.33"/>
    </reaction>
</comment>
<comment type="catalytic activity">
    <reaction evidence="1">
        <text>a guanosine in mRNA + S-adenosyl-L-methionine = an N(7)-methylguanosine in mRNA + S-adenosyl-L-homocysteine</text>
        <dbReference type="Rhea" id="RHEA:60508"/>
        <dbReference type="Rhea" id="RHEA-COMP:15584"/>
        <dbReference type="Rhea" id="RHEA-COMP:15585"/>
        <dbReference type="ChEBI" id="CHEBI:57856"/>
        <dbReference type="ChEBI" id="CHEBI:59789"/>
        <dbReference type="ChEBI" id="CHEBI:74269"/>
        <dbReference type="ChEBI" id="CHEBI:74480"/>
    </reaction>
    <physiologicalReaction direction="left-to-right" evidence="1">
        <dbReference type="Rhea" id="RHEA:60509"/>
    </physiologicalReaction>
</comment>
<comment type="catalytic activity">
    <reaction evidence="1">
        <text>a guanosine in miRNA + S-adenosyl-L-methionine = an N(7)-methylguanosine in miRNA + S-adenosyl-L-homocysteine</text>
        <dbReference type="Rhea" id="RHEA:60512"/>
        <dbReference type="Rhea" id="RHEA-COMP:15587"/>
        <dbReference type="Rhea" id="RHEA-COMP:15588"/>
        <dbReference type="ChEBI" id="CHEBI:57856"/>
        <dbReference type="ChEBI" id="CHEBI:59789"/>
        <dbReference type="ChEBI" id="CHEBI:74269"/>
        <dbReference type="ChEBI" id="CHEBI:74480"/>
    </reaction>
    <physiologicalReaction direction="left-to-right" evidence="1">
        <dbReference type="Rhea" id="RHEA:60513"/>
    </physiologicalReaction>
</comment>
<comment type="pathway">
    <text evidence="3">tRNA modification; N(7)-methylguanine-tRNA biosynthesis.</text>
</comment>
<comment type="subunit">
    <text evidence="1">Catalytic component of the METTL1-WDR4 complex, composed of METTL1 and WDR4.</text>
</comment>
<comment type="subcellular location">
    <subcellularLocation>
        <location evidence="1">Nucleus</location>
    </subcellularLocation>
</comment>
<comment type="domain">
    <text evidence="1">Upon tRNA-binding, the alphaC region transforms into a helix, which together with the alpha6 helix secures both ends of the tRNA variable loop (By similarity). The N-terminal disordered region is part of the catalytic pocket and essential for methyltransferase activity: upon S-adenosyl-L-methionine- and tRNA-binding, the N-terminal disordered region becomes ordered, sandwiched between the bound cofactor and the tRNA, and the WDR4 C-terminus attaches to the METTL1 N-terminus to stabilize the bound tRNA together (By similarity). Together with WDR4, which also binds tRNAs, tRNAs undergo bending to facilitate G46 flipping into the catalytic pocket to be modified (By similarity).</text>
</comment>
<comment type="PTM">
    <text evidence="1">Phosphorylation at Ser-21 by PKB/AKT1 inactivates its methyltransferase activity via a steric interference mechanism in the active site that locally disrupts the catalytic center (By similarity). Phosphorylation at Ser-21 does not affect the interaction with WDR4 (By similarity).</text>
</comment>
<comment type="disruption phenotype">
    <text evidence="4">Conditional knockout in the liver impairs the formation of N(7)-methylguanine at position 46 (m7G46) in tRNAs and inhibits tumor development in an intrahepatic cholangiocarcinoma xenograph mouse model.</text>
</comment>
<comment type="miscellaneous">
    <text evidence="4">In the context of cancer, overexpression of the METTL1-WDR4 methyltransferase complex promotes cancer progression by driving oncogenic transformation (PubMed:34352206). Drives oncogenesis by mediating the formation of N(7)-methylguanine at position 46 (m7G46) in some tRNAs, in particular Arg-TCT-4-1 (TRR-TCT4-1), leading to increased translation of mRNAs, including cell cycle regulators that are enriched in the corresponding AGA codon (PubMed:34352206).</text>
</comment>
<comment type="similarity">
    <text evidence="1">Belongs to the class I-like SAM-binding methyltransferase superfamily. TrmB family.</text>
</comment>
<gene>
    <name evidence="6" type="primary">Mettl1</name>
</gene>
<dbReference type="EC" id="2.1.1.33" evidence="1"/>
<dbReference type="EC" id="2.1.1.-" evidence="1"/>
<dbReference type="EMBL" id="AB023619">
    <property type="protein sequence ID" value="BAA75230.1"/>
    <property type="molecule type" value="mRNA"/>
</dbReference>
<dbReference type="EMBL" id="AK160914">
    <property type="protein sequence ID" value="BAE36088.1"/>
    <property type="molecule type" value="mRNA"/>
</dbReference>
<dbReference type="EMBL" id="CH466578">
    <property type="protein sequence ID" value="EDL24462.1"/>
    <property type="molecule type" value="Genomic_DNA"/>
</dbReference>
<dbReference type="EMBL" id="BC012649">
    <property type="protein sequence ID" value="AAH12649.1"/>
    <property type="molecule type" value="mRNA"/>
</dbReference>
<dbReference type="EMBL" id="Y18644">
    <property type="protein sequence ID" value="CAA77240.1"/>
    <property type="molecule type" value="mRNA"/>
</dbReference>
<dbReference type="CCDS" id="CCDS24223.1"/>
<dbReference type="RefSeq" id="NP_034922.1">
    <property type="nucleotide sequence ID" value="NM_010792.1"/>
</dbReference>
<dbReference type="SMR" id="Q9Z120"/>
<dbReference type="BioGRID" id="201404">
    <property type="interactions" value="15"/>
</dbReference>
<dbReference type="FunCoup" id="Q9Z120">
    <property type="interactions" value="1834"/>
</dbReference>
<dbReference type="STRING" id="10090.ENSMUSP00000006915"/>
<dbReference type="iPTMnet" id="Q9Z120"/>
<dbReference type="PhosphoSitePlus" id="Q9Z120"/>
<dbReference type="SwissPalm" id="Q9Z120"/>
<dbReference type="PaxDb" id="10090-ENSMUSP00000006915"/>
<dbReference type="PeptideAtlas" id="Q9Z120"/>
<dbReference type="ProteomicsDB" id="258854"/>
<dbReference type="Pumba" id="Q9Z120"/>
<dbReference type="Antibodypedia" id="16399">
    <property type="antibodies" value="173 antibodies from 29 providers"/>
</dbReference>
<dbReference type="DNASU" id="17299"/>
<dbReference type="Ensembl" id="ENSMUST00000006915.14">
    <property type="protein sequence ID" value="ENSMUSP00000006915.8"/>
    <property type="gene ID" value="ENSMUSG00000006732.15"/>
</dbReference>
<dbReference type="GeneID" id="17299"/>
<dbReference type="KEGG" id="mmu:17299"/>
<dbReference type="UCSC" id="uc007hhq.1">
    <property type="organism name" value="mouse"/>
</dbReference>
<dbReference type="AGR" id="MGI:1339986"/>
<dbReference type="CTD" id="4234"/>
<dbReference type="MGI" id="MGI:1339986">
    <property type="gene designation" value="Mettl1"/>
</dbReference>
<dbReference type="VEuPathDB" id="HostDB:ENSMUSG00000006732"/>
<dbReference type="eggNOG" id="KOG3115">
    <property type="taxonomic scope" value="Eukaryota"/>
</dbReference>
<dbReference type="GeneTree" id="ENSGT00390000017840"/>
<dbReference type="HOGENOM" id="CLU_050910_3_0_1"/>
<dbReference type="InParanoid" id="Q9Z120"/>
<dbReference type="OMA" id="LPNYFAK"/>
<dbReference type="OrthoDB" id="47276at2759"/>
<dbReference type="PhylomeDB" id="Q9Z120"/>
<dbReference type="TreeFam" id="TF314083"/>
<dbReference type="UniPathway" id="UPA00989"/>
<dbReference type="BioGRID-ORCS" id="17299">
    <property type="hits" value="17 hits in 80 CRISPR screens"/>
</dbReference>
<dbReference type="PRO" id="PR:Q9Z120"/>
<dbReference type="Proteomes" id="UP000000589">
    <property type="component" value="Chromosome 10"/>
</dbReference>
<dbReference type="RNAct" id="Q9Z120">
    <property type="molecule type" value="protein"/>
</dbReference>
<dbReference type="Bgee" id="ENSMUSG00000006732">
    <property type="expression patterns" value="Expressed in lacrimal gland and 213 other cell types or tissues"/>
</dbReference>
<dbReference type="ExpressionAtlas" id="Q9Z120">
    <property type="expression patterns" value="baseline and differential"/>
</dbReference>
<dbReference type="GO" id="GO:0005829">
    <property type="term" value="C:cytosol"/>
    <property type="evidence" value="ECO:0007669"/>
    <property type="project" value="Ensembl"/>
</dbReference>
<dbReference type="GO" id="GO:0005730">
    <property type="term" value="C:nucleolus"/>
    <property type="evidence" value="ECO:0007669"/>
    <property type="project" value="Ensembl"/>
</dbReference>
<dbReference type="GO" id="GO:0005654">
    <property type="term" value="C:nucleoplasm"/>
    <property type="evidence" value="ECO:0007669"/>
    <property type="project" value="Ensembl"/>
</dbReference>
<dbReference type="GO" id="GO:0005634">
    <property type="term" value="C:nucleus"/>
    <property type="evidence" value="ECO:0000250"/>
    <property type="project" value="UniProtKB"/>
</dbReference>
<dbReference type="GO" id="GO:0106143">
    <property type="term" value="C:tRNA (m7G46) methyltransferase complex"/>
    <property type="evidence" value="ECO:0000250"/>
    <property type="project" value="UniProtKB"/>
</dbReference>
<dbReference type="GO" id="GO:0160090">
    <property type="term" value="F:internal mRNA (guanine-N7-)-methyltransferase activity"/>
    <property type="evidence" value="ECO:0007669"/>
    <property type="project" value="Ensembl"/>
</dbReference>
<dbReference type="GO" id="GO:0008176">
    <property type="term" value="F:tRNA (guanine(46)-N7)-methyltransferase activity"/>
    <property type="evidence" value="ECO:0000250"/>
    <property type="project" value="UniProtKB"/>
</dbReference>
<dbReference type="GO" id="GO:0000049">
    <property type="term" value="F:tRNA binding"/>
    <property type="evidence" value="ECO:0007669"/>
    <property type="project" value="UniProtKB-UniRule"/>
</dbReference>
<dbReference type="GO" id="GO:0033554">
    <property type="term" value="P:cellular response to stress"/>
    <property type="evidence" value="ECO:0007669"/>
    <property type="project" value="Ensembl"/>
</dbReference>
<dbReference type="GO" id="GO:0106004">
    <property type="term" value="P:tRNA (guanine-N7)-methylation"/>
    <property type="evidence" value="ECO:0000250"/>
    <property type="project" value="UniProtKB"/>
</dbReference>
<dbReference type="GO" id="GO:0006400">
    <property type="term" value="P:tRNA modification"/>
    <property type="evidence" value="ECO:0000250"/>
    <property type="project" value="UniProtKB"/>
</dbReference>
<dbReference type="GO" id="GO:0036416">
    <property type="term" value="P:tRNA stabilization"/>
    <property type="evidence" value="ECO:0007669"/>
    <property type="project" value="Ensembl"/>
</dbReference>
<dbReference type="FunFam" id="3.40.50.150:FF:000060">
    <property type="entry name" value="tRNA (guanine-N(7)-)-methyltransferase"/>
    <property type="match status" value="1"/>
</dbReference>
<dbReference type="Gene3D" id="3.40.50.150">
    <property type="entry name" value="Vaccinia Virus protein VP39"/>
    <property type="match status" value="1"/>
</dbReference>
<dbReference type="HAMAP" id="MF_03055">
    <property type="entry name" value="tRNA_methyltr_TrmB_euk"/>
    <property type="match status" value="1"/>
</dbReference>
<dbReference type="InterPro" id="IPR029063">
    <property type="entry name" value="SAM-dependent_MTases_sf"/>
</dbReference>
<dbReference type="InterPro" id="IPR025763">
    <property type="entry name" value="Trm8_euk"/>
</dbReference>
<dbReference type="InterPro" id="IPR003358">
    <property type="entry name" value="tRNA_(Gua-N-7)_MeTrfase_Trmb"/>
</dbReference>
<dbReference type="NCBIfam" id="TIGR00091">
    <property type="entry name" value="tRNA (guanosine(46)-N7)-methyltransferase TrmB"/>
    <property type="match status" value="1"/>
</dbReference>
<dbReference type="PANTHER" id="PTHR23417">
    <property type="entry name" value="3-DEOXY-D-MANNO-OCTULOSONIC-ACID TRANSFERASE/TRNA GUANINE-N 7 - -METHYLTRANSFERASE"/>
    <property type="match status" value="1"/>
</dbReference>
<dbReference type="PANTHER" id="PTHR23417:SF16">
    <property type="entry name" value="TRNA (GUANINE-N(7)-)-METHYLTRANSFERASE"/>
    <property type="match status" value="1"/>
</dbReference>
<dbReference type="Pfam" id="PF02390">
    <property type="entry name" value="Methyltransf_4"/>
    <property type="match status" value="1"/>
</dbReference>
<dbReference type="SUPFAM" id="SSF53335">
    <property type="entry name" value="S-adenosyl-L-methionine-dependent methyltransferases"/>
    <property type="match status" value="1"/>
</dbReference>
<dbReference type="PROSITE" id="PS51625">
    <property type="entry name" value="SAM_MT_TRMB"/>
    <property type="match status" value="1"/>
</dbReference>